<feature type="chain" id="PRO_1000056055" description="Large ribosomal subunit protein uL30">
    <location>
        <begin position="1"/>
        <end position="61"/>
    </location>
</feature>
<gene>
    <name evidence="1" type="primary">rpmD</name>
    <name type="ordered locus">LBUL_0368</name>
</gene>
<protein>
    <recommendedName>
        <fullName evidence="1">Large ribosomal subunit protein uL30</fullName>
    </recommendedName>
    <alternativeName>
        <fullName evidence="2">50S ribosomal protein L30</fullName>
    </alternativeName>
</protein>
<sequence length="61" mass="6674">MTDLKITLIRSVAHRLPEQRKVVKALGLGKINSTVVQPDNAATRGALMKIAHLISVEEVNK</sequence>
<comment type="subunit">
    <text evidence="1">Part of the 50S ribosomal subunit.</text>
</comment>
<comment type="similarity">
    <text evidence="1">Belongs to the universal ribosomal protein uL30 family.</text>
</comment>
<keyword id="KW-0687">Ribonucleoprotein</keyword>
<keyword id="KW-0689">Ribosomal protein</keyword>
<proteinExistence type="inferred from homology"/>
<dbReference type="EMBL" id="CP000412">
    <property type="protein sequence ID" value="ABJ58025.1"/>
    <property type="molecule type" value="Genomic_DNA"/>
</dbReference>
<dbReference type="RefSeq" id="WP_002878183.1">
    <property type="nucleotide sequence ID" value="NC_008529.1"/>
</dbReference>
<dbReference type="SMR" id="Q04BZ7"/>
<dbReference type="GeneID" id="69668444"/>
<dbReference type="KEGG" id="lbu:LBUL_0368"/>
<dbReference type="HOGENOM" id="CLU_131047_2_1_9"/>
<dbReference type="BioCyc" id="LDEL321956:LBUL_RS01720-MONOMER"/>
<dbReference type="GO" id="GO:0022625">
    <property type="term" value="C:cytosolic large ribosomal subunit"/>
    <property type="evidence" value="ECO:0007669"/>
    <property type="project" value="TreeGrafter"/>
</dbReference>
<dbReference type="GO" id="GO:0003735">
    <property type="term" value="F:structural constituent of ribosome"/>
    <property type="evidence" value="ECO:0007669"/>
    <property type="project" value="InterPro"/>
</dbReference>
<dbReference type="GO" id="GO:0006412">
    <property type="term" value="P:translation"/>
    <property type="evidence" value="ECO:0007669"/>
    <property type="project" value="UniProtKB-UniRule"/>
</dbReference>
<dbReference type="CDD" id="cd01658">
    <property type="entry name" value="Ribosomal_L30"/>
    <property type="match status" value="1"/>
</dbReference>
<dbReference type="Gene3D" id="3.30.1390.20">
    <property type="entry name" value="Ribosomal protein L30, ferredoxin-like fold domain"/>
    <property type="match status" value="1"/>
</dbReference>
<dbReference type="HAMAP" id="MF_01371_B">
    <property type="entry name" value="Ribosomal_uL30_B"/>
    <property type="match status" value="1"/>
</dbReference>
<dbReference type="InterPro" id="IPR036919">
    <property type="entry name" value="Ribo_uL30_ferredoxin-like_sf"/>
</dbReference>
<dbReference type="InterPro" id="IPR005996">
    <property type="entry name" value="Ribosomal_uL30_bac-type"/>
</dbReference>
<dbReference type="InterPro" id="IPR016082">
    <property type="entry name" value="Ribosomal_uL30_ferredoxin-like"/>
</dbReference>
<dbReference type="NCBIfam" id="TIGR01308">
    <property type="entry name" value="rpmD_bact"/>
    <property type="match status" value="1"/>
</dbReference>
<dbReference type="PANTHER" id="PTHR15892:SF2">
    <property type="entry name" value="LARGE RIBOSOMAL SUBUNIT PROTEIN UL30M"/>
    <property type="match status" value="1"/>
</dbReference>
<dbReference type="PANTHER" id="PTHR15892">
    <property type="entry name" value="MITOCHONDRIAL RIBOSOMAL PROTEIN L30"/>
    <property type="match status" value="1"/>
</dbReference>
<dbReference type="Pfam" id="PF00327">
    <property type="entry name" value="Ribosomal_L30"/>
    <property type="match status" value="1"/>
</dbReference>
<dbReference type="PIRSF" id="PIRSF002211">
    <property type="entry name" value="Ribosomal_L30_bac-type"/>
    <property type="match status" value="1"/>
</dbReference>
<dbReference type="SUPFAM" id="SSF55129">
    <property type="entry name" value="Ribosomal protein L30p/L7e"/>
    <property type="match status" value="1"/>
</dbReference>
<organism>
    <name type="scientific">Lactobacillus delbrueckii subsp. bulgaricus (strain ATCC BAA-365 / Lb-18)</name>
    <dbReference type="NCBI Taxonomy" id="321956"/>
    <lineage>
        <taxon>Bacteria</taxon>
        <taxon>Bacillati</taxon>
        <taxon>Bacillota</taxon>
        <taxon>Bacilli</taxon>
        <taxon>Lactobacillales</taxon>
        <taxon>Lactobacillaceae</taxon>
        <taxon>Lactobacillus</taxon>
    </lineage>
</organism>
<evidence type="ECO:0000255" key="1">
    <source>
        <dbReference type="HAMAP-Rule" id="MF_01371"/>
    </source>
</evidence>
<evidence type="ECO:0000305" key="2"/>
<name>RL30_LACDB</name>
<reference key="1">
    <citation type="journal article" date="2006" name="Proc. Natl. Acad. Sci. U.S.A.">
        <title>Comparative genomics of the lactic acid bacteria.</title>
        <authorList>
            <person name="Makarova K.S."/>
            <person name="Slesarev A."/>
            <person name="Wolf Y.I."/>
            <person name="Sorokin A."/>
            <person name="Mirkin B."/>
            <person name="Koonin E.V."/>
            <person name="Pavlov A."/>
            <person name="Pavlova N."/>
            <person name="Karamychev V."/>
            <person name="Polouchine N."/>
            <person name="Shakhova V."/>
            <person name="Grigoriev I."/>
            <person name="Lou Y."/>
            <person name="Rohksar D."/>
            <person name="Lucas S."/>
            <person name="Huang K."/>
            <person name="Goodstein D.M."/>
            <person name="Hawkins T."/>
            <person name="Plengvidhya V."/>
            <person name="Welker D."/>
            <person name="Hughes J."/>
            <person name="Goh Y."/>
            <person name="Benson A."/>
            <person name="Baldwin K."/>
            <person name="Lee J.-H."/>
            <person name="Diaz-Muniz I."/>
            <person name="Dosti B."/>
            <person name="Smeianov V."/>
            <person name="Wechter W."/>
            <person name="Barabote R."/>
            <person name="Lorca G."/>
            <person name="Altermann E."/>
            <person name="Barrangou R."/>
            <person name="Ganesan B."/>
            <person name="Xie Y."/>
            <person name="Rawsthorne H."/>
            <person name="Tamir D."/>
            <person name="Parker C."/>
            <person name="Breidt F."/>
            <person name="Broadbent J.R."/>
            <person name="Hutkins R."/>
            <person name="O'Sullivan D."/>
            <person name="Steele J."/>
            <person name="Unlu G."/>
            <person name="Saier M.H. Jr."/>
            <person name="Klaenhammer T."/>
            <person name="Richardson P."/>
            <person name="Kozyavkin S."/>
            <person name="Weimer B.C."/>
            <person name="Mills D.A."/>
        </authorList>
    </citation>
    <scope>NUCLEOTIDE SEQUENCE [LARGE SCALE GENOMIC DNA]</scope>
    <source>
        <strain>ATCC BAA-365 / Lb-18</strain>
    </source>
</reference>
<accession>Q04BZ7</accession>